<proteinExistence type="inferred from homology"/>
<name>KTHY_DESAP</name>
<keyword id="KW-0067">ATP-binding</keyword>
<keyword id="KW-0418">Kinase</keyword>
<keyword id="KW-0545">Nucleotide biosynthesis</keyword>
<keyword id="KW-0547">Nucleotide-binding</keyword>
<keyword id="KW-1185">Reference proteome</keyword>
<keyword id="KW-0808">Transferase</keyword>
<comment type="function">
    <text evidence="1">Phosphorylation of dTMP to form dTDP in both de novo and salvage pathways of dTTP synthesis.</text>
</comment>
<comment type="catalytic activity">
    <reaction evidence="1">
        <text>dTMP + ATP = dTDP + ADP</text>
        <dbReference type="Rhea" id="RHEA:13517"/>
        <dbReference type="ChEBI" id="CHEBI:30616"/>
        <dbReference type="ChEBI" id="CHEBI:58369"/>
        <dbReference type="ChEBI" id="CHEBI:63528"/>
        <dbReference type="ChEBI" id="CHEBI:456216"/>
        <dbReference type="EC" id="2.7.4.9"/>
    </reaction>
</comment>
<comment type="similarity">
    <text evidence="1">Belongs to the thymidylate kinase family.</text>
</comment>
<evidence type="ECO:0000255" key="1">
    <source>
        <dbReference type="HAMAP-Rule" id="MF_00165"/>
    </source>
</evidence>
<accession>B1I165</accession>
<reference key="1">
    <citation type="submission" date="2007-10" db="EMBL/GenBank/DDBJ databases">
        <title>Complete sequence of chromosome of Desulforudis audaxviator MP104C.</title>
        <authorList>
            <person name="Copeland A."/>
            <person name="Lucas S."/>
            <person name="Lapidus A."/>
            <person name="Barry K."/>
            <person name="Glavina del Rio T."/>
            <person name="Dalin E."/>
            <person name="Tice H."/>
            <person name="Bruce D."/>
            <person name="Pitluck S."/>
            <person name="Lowry S.R."/>
            <person name="Larimer F."/>
            <person name="Land M.L."/>
            <person name="Hauser L."/>
            <person name="Kyrpides N."/>
            <person name="Ivanova N.N."/>
            <person name="Richardson P."/>
        </authorList>
    </citation>
    <scope>NUCLEOTIDE SEQUENCE [LARGE SCALE GENOMIC DNA]</scope>
    <source>
        <strain>MP104C</strain>
    </source>
</reference>
<organism>
    <name type="scientific">Desulforudis audaxviator (strain MP104C)</name>
    <dbReference type="NCBI Taxonomy" id="477974"/>
    <lineage>
        <taxon>Bacteria</taxon>
        <taxon>Bacillati</taxon>
        <taxon>Bacillota</taxon>
        <taxon>Clostridia</taxon>
        <taxon>Thermoanaerobacterales</taxon>
        <taxon>Candidatus Desulforudaceae</taxon>
        <taxon>Candidatus Desulforudis</taxon>
    </lineage>
</organism>
<dbReference type="EC" id="2.7.4.9" evidence="1"/>
<dbReference type="EMBL" id="CP000860">
    <property type="protein sequence ID" value="ACA58605.1"/>
    <property type="molecule type" value="Genomic_DNA"/>
</dbReference>
<dbReference type="SMR" id="B1I165"/>
<dbReference type="STRING" id="477974.Daud_0036"/>
<dbReference type="KEGG" id="dau:Daud_0036"/>
<dbReference type="eggNOG" id="COG0125">
    <property type="taxonomic scope" value="Bacteria"/>
</dbReference>
<dbReference type="HOGENOM" id="CLU_049131_0_2_9"/>
<dbReference type="OrthoDB" id="9774907at2"/>
<dbReference type="Proteomes" id="UP000008544">
    <property type="component" value="Chromosome"/>
</dbReference>
<dbReference type="GO" id="GO:0005829">
    <property type="term" value="C:cytosol"/>
    <property type="evidence" value="ECO:0007669"/>
    <property type="project" value="TreeGrafter"/>
</dbReference>
<dbReference type="GO" id="GO:0005524">
    <property type="term" value="F:ATP binding"/>
    <property type="evidence" value="ECO:0007669"/>
    <property type="project" value="UniProtKB-UniRule"/>
</dbReference>
<dbReference type="GO" id="GO:0004798">
    <property type="term" value="F:dTMP kinase activity"/>
    <property type="evidence" value="ECO:0007669"/>
    <property type="project" value="UniProtKB-UniRule"/>
</dbReference>
<dbReference type="GO" id="GO:0006233">
    <property type="term" value="P:dTDP biosynthetic process"/>
    <property type="evidence" value="ECO:0007669"/>
    <property type="project" value="InterPro"/>
</dbReference>
<dbReference type="GO" id="GO:0006235">
    <property type="term" value="P:dTTP biosynthetic process"/>
    <property type="evidence" value="ECO:0007669"/>
    <property type="project" value="UniProtKB-UniRule"/>
</dbReference>
<dbReference type="GO" id="GO:0006227">
    <property type="term" value="P:dUDP biosynthetic process"/>
    <property type="evidence" value="ECO:0007669"/>
    <property type="project" value="TreeGrafter"/>
</dbReference>
<dbReference type="CDD" id="cd01672">
    <property type="entry name" value="TMPK"/>
    <property type="match status" value="1"/>
</dbReference>
<dbReference type="FunFam" id="3.40.50.300:FF:000225">
    <property type="entry name" value="Thymidylate kinase"/>
    <property type="match status" value="1"/>
</dbReference>
<dbReference type="Gene3D" id="3.40.50.300">
    <property type="entry name" value="P-loop containing nucleotide triphosphate hydrolases"/>
    <property type="match status" value="1"/>
</dbReference>
<dbReference type="HAMAP" id="MF_00165">
    <property type="entry name" value="Thymidylate_kinase"/>
    <property type="match status" value="1"/>
</dbReference>
<dbReference type="InterPro" id="IPR027417">
    <property type="entry name" value="P-loop_NTPase"/>
</dbReference>
<dbReference type="InterPro" id="IPR039430">
    <property type="entry name" value="Thymidylate_kin-like_dom"/>
</dbReference>
<dbReference type="InterPro" id="IPR018095">
    <property type="entry name" value="Thymidylate_kin_CS"/>
</dbReference>
<dbReference type="InterPro" id="IPR018094">
    <property type="entry name" value="Thymidylate_kinase"/>
</dbReference>
<dbReference type="NCBIfam" id="TIGR00041">
    <property type="entry name" value="DTMP_kinase"/>
    <property type="match status" value="1"/>
</dbReference>
<dbReference type="PANTHER" id="PTHR10344">
    <property type="entry name" value="THYMIDYLATE KINASE"/>
    <property type="match status" value="1"/>
</dbReference>
<dbReference type="PANTHER" id="PTHR10344:SF4">
    <property type="entry name" value="UMP-CMP KINASE 2, MITOCHONDRIAL"/>
    <property type="match status" value="1"/>
</dbReference>
<dbReference type="Pfam" id="PF02223">
    <property type="entry name" value="Thymidylate_kin"/>
    <property type="match status" value="1"/>
</dbReference>
<dbReference type="SUPFAM" id="SSF52540">
    <property type="entry name" value="P-loop containing nucleoside triphosphate hydrolases"/>
    <property type="match status" value="1"/>
</dbReference>
<dbReference type="PROSITE" id="PS01331">
    <property type="entry name" value="THYMIDYLATE_KINASE"/>
    <property type="match status" value="1"/>
</dbReference>
<gene>
    <name evidence="1" type="primary">tmk</name>
    <name type="ordered locus">Daud_0036</name>
</gene>
<sequence>MSGVFIVFEGIDGAGKTTQLAYLHEALLSMRNHRVLVTREPGGTRIGEAVRRVLLDTGNSEMTGETEALLYAAARSQFTAEVVRPALARGEIVLSDRFLDSSLAYQGFGRGLELHRLRQVNFLATGGLRPDLTVLLDLPVAAAVARMDPDRRDRLEREGVDFFERVRRGYLELASADPGHYLIVNAEREAGVCASAIWARVRALLQDRPTFGGCPGLDGGS</sequence>
<protein>
    <recommendedName>
        <fullName evidence="1">Thymidylate kinase</fullName>
        <ecNumber evidence="1">2.7.4.9</ecNumber>
    </recommendedName>
    <alternativeName>
        <fullName evidence="1">dTMP kinase</fullName>
    </alternativeName>
</protein>
<feature type="chain" id="PRO_1000190759" description="Thymidylate kinase">
    <location>
        <begin position="1"/>
        <end position="221"/>
    </location>
</feature>
<feature type="binding site" evidence="1">
    <location>
        <begin position="10"/>
        <end position="17"/>
    </location>
    <ligand>
        <name>ATP</name>
        <dbReference type="ChEBI" id="CHEBI:30616"/>
    </ligand>
</feature>